<keyword id="KW-0342">GTP-binding</keyword>
<keyword id="KW-0378">Hydrolase</keyword>
<keyword id="KW-0449">Lipoprotein</keyword>
<keyword id="KW-0460">Magnesium</keyword>
<keyword id="KW-0479">Metal-binding</keyword>
<keyword id="KW-0519">Myristate</keyword>
<keyword id="KW-0547">Nucleotide-binding</keyword>
<keyword id="KW-0564">Palmitate</keyword>
<keyword id="KW-0807">Transducer</keyword>
<dbReference type="EMBL" id="X99485">
    <property type="protein sequence ID" value="CAA67845.1"/>
    <property type="molecule type" value="mRNA"/>
</dbReference>
<dbReference type="SMR" id="Q40224"/>
<dbReference type="GO" id="GO:0005737">
    <property type="term" value="C:cytoplasm"/>
    <property type="evidence" value="ECO:0007669"/>
    <property type="project" value="TreeGrafter"/>
</dbReference>
<dbReference type="GO" id="GO:0005834">
    <property type="term" value="C:heterotrimeric G-protein complex"/>
    <property type="evidence" value="ECO:0007669"/>
    <property type="project" value="InterPro"/>
</dbReference>
<dbReference type="GO" id="GO:0001664">
    <property type="term" value="F:G protein-coupled receptor binding"/>
    <property type="evidence" value="ECO:0007669"/>
    <property type="project" value="InterPro"/>
</dbReference>
<dbReference type="GO" id="GO:0031683">
    <property type="term" value="F:G-protein beta/gamma-subunit complex binding"/>
    <property type="evidence" value="ECO:0007669"/>
    <property type="project" value="InterPro"/>
</dbReference>
<dbReference type="GO" id="GO:0005525">
    <property type="term" value="F:GTP binding"/>
    <property type="evidence" value="ECO:0007669"/>
    <property type="project" value="UniProtKB-KW"/>
</dbReference>
<dbReference type="GO" id="GO:0003924">
    <property type="term" value="F:GTPase activity"/>
    <property type="evidence" value="ECO:0007669"/>
    <property type="project" value="InterPro"/>
</dbReference>
<dbReference type="GO" id="GO:0046872">
    <property type="term" value="F:metal ion binding"/>
    <property type="evidence" value="ECO:0007669"/>
    <property type="project" value="UniProtKB-KW"/>
</dbReference>
<dbReference type="GO" id="GO:0007188">
    <property type="term" value="P:adenylate cyclase-modulating G protein-coupled receptor signaling pathway"/>
    <property type="evidence" value="ECO:0007669"/>
    <property type="project" value="InterPro"/>
</dbReference>
<dbReference type="CDD" id="cd00066">
    <property type="entry name" value="G-alpha"/>
    <property type="match status" value="1"/>
</dbReference>
<dbReference type="FunFam" id="1.10.400.10:FF:000008">
    <property type="entry name" value="Guanine nucleotide-binding protein alpha-1 subunit"/>
    <property type="match status" value="1"/>
</dbReference>
<dbReference type="FunFam" id="3.40.50.300:FF:000733">
    <property type="entry name" value="Guanine nucleotide-binding protein alpha-1 subunit"/>
    <property type="match status" value="1"/>
</dbReference>
<dbReference type="Gene3D" id="1.10.400.10">
    <property type="entry name" value="GI Alpha 1, domain 2-like"/>
    <property type="match status" value="1"/>
</dbReference>
<dbReference type="Gene3D" id="3.40.50.300">
    <property type="entry name" value="P-loop containing nucleotide triphosphate hydrolases"/>
    <property type="match status" value="1"/>
</dbReference>
<dbReference type="InterPro" id="IPR001019">
    <property type="entry name" value="Gprotein_alpha_su"/>
</dbReference>
<dbReference type="InterPro" id="IPR011025">
    <property type="entry name" value="GproteinA_insert"/>
</dbReference>
<dbReference type="InterPro" id="IPR027417">
    <property type="entry name" value="P-loop_NTPase"/>
</dbReference>
<dbReference type="InterPro" id="IPR002976">
    <property type="entry name" value="Plant_Gprotein_alpha"/>
</dbReference>
<dbReference type="PANTHER" id="PTHR10218">
    <property type="entry name" value="GTP-BINDING PROTEIN ALPHA SUBUNIT"/>
    <property type="match status" value="1"/>
</dbReference>
<dbReference type="PANTHER" id="PTHR10218:SF302">
    <property type="entry name" value="GUANINE NUCLEOTIDE-BINDING PROTEIN ALPHA-5 SUBUNIT"/>
    <property type="match status" value="1"/>
</dbReference>
<dbReference type="Pfam" id="PF00503">
    <property type="entry name" value="G-alpha"/>
    <property type="match status" value="1"/>
</dbReference>
<dbReference type="PRINTS" id="PR00318">
    <property type="entry name" value="GPROTEINA"/>
</dbReference>
<dbReference type="PRINTS" id="PR01242">
    <property type="entry name" value="GPROTEINAPLT"/>
</dbReference>
<dbReference type="SMART" id="SM00275">
    <property type="entry name" value="G_alpha"/>
    <property type="match status" value="1"/>
</dbReference>
<dbReference type="SUPFAM" id="SSF52540">
    <property type="entry name" value="P-loop containing nucleoside triphosphate hydrolases"/>
    <property type="match status" value="1"/>
</dbReference>
<dbReference type="SUPFAM" id="SSF47895">
    <property type="entry name" value="Transducin (alpha subunit), insertion domain"/>
    <property type="match status" value="1"/>
</dbReference>
<dbReference type="PROSITE" id="PS51882">
    <property type="entry name" value="G_ALPHA"/>
    <property type="match status" value="1"/>
</dbReference>
<sequence>MGLLCSRNRRYNDADAEENAQAAEIERRIELETKAEKHIQKLLLLGAGESGKSTIFKQIKLLFQTGFDEAELKSYLPVIHANVFQTIKLLHDGSKELAQNDVDSSKYVISDENKDIGEKLSEIGSKLDYPYLTTELAKEIETLWEDAAIQETYARGNELQVPGCAHYFMENLQRLSDANYVPTKEDVLYARVRTTGVVEIQFSPVGENKRSGEVYRLFDVGGQRNERRKWIHLFEGVSAVIFCAAISEYDQTLFEDENKNRMTETKELFEWILKQPCFEKTSFMLFLNKFDIFEKKILKVPLNVCEWFKDYQPVSTGKQEIEHAYEFVKKKFEELYFQSTAPERVDRVFKVYRTTALDQKLIKKTFKLVDESLRRRNLFEAGLL</sequence>
<accession>Q40224</accession>
<reference key="1">
    <citation type="online journal article" date="1996" name="Plant Gene Register">
        <title>Isolation of cDNAs encoding the subunit alpha of heterotrimeric G proteins from Lupinus luteus.</title>
        <authorList>
            <person name="Kutsnetsov V.V."/>
            <person name="Oelmueller R."/>
        </authorList>
        <locator>PGR96-113</locator>
    </citation>
    <scope>NUCLEOTIDE SEQUENCE [MRNA]</scope>
    <source>
        <tissue>Seedling</tissue>
    </source>
</reference>
<organism>
    <name type="scientific">Lupinus luteus</name>
    <name type="common">European yellow lupine</name>
    <dbReference type="NCBI Taxonomy" id="3873"/>
    <lineage>
        <taxon>Eukaryota</taxon>
        <taxon>Viridiplantae</taxon>
        <taxon>Streptophyta</taxon>
        <taxon>Embryophyta</taxon>
        <taxon>Tracheophyta</taxon>
        <taxon>Spermatophyta</taxon>
        <taxon>Magnoliopsida</taxon>
        <taxon>eudicotyledons</taxon>
        <taxon>Gunneridae</taxon>
        <taxon>Pentapetalae</taxon>
        <taxon>rosids</taxon>
        <taxon>fabids</taxon>
        <taxon>Fabales</taxon>
        <taxon>Fabaceae</taxon>
        <taxon>Papilionoideae</taxon>
        <taxon>50 kb inversion clade</taxon>
        <taxon>genistoids sensu lato</taxon>
        <taxon>core genistoids</taxon>
        <taxon>Genisteae</taxon>
        <taxon>Lupinus</taxon>
    </lineage>
</organism>
<protein>
    <recommendedName>
        <fullName>Guanine nucleotide-binding protein alpha-1 subunit</fullName>
        <shortName>GP-alpha-1</shortName>
    </recommendedName>
</protein>
<comment type="function">
    <text>Guanine nucleotide-binding proteins (G proteins) are involved as modulators or transducers in various transmembrane signaling systems.</text>
</comment>
<comment type="cofactor">
    <cofactor evidence="2">
        <name>Mg(2+)</name>
        <dbReference type="ChEBI" id="CHEBI:18420"/>
    </cofactor>
</comment>
<comment type="subunit">
    <text>G proteins are composed of 3 units; alpha, beta and gamma. The alpha chain contains the guanine nucleotide binding site.</text>
</comment>
<comment type="domain">
    <text evidence="1">The helical domain (69-189) is required for self-activation.</text>
</comment>
<comment type="similarity">
    <text evidence="5">Belongs to the G-alpha family.</text>
</comment>
<evidence type="ECO:0000250" key="1"/>
<evidence type="ECO:0000250" key="2">
    <source>
        <dbReference type="UniProtKB" id="P18064"/>
    </source>
</evidence>
<evidence type="ECO:0000255" key="3"/>
<evidence type="ECO:0000255" key="4">
    <source>
        <dbReference type="PROSITE-ProRule" id="PRU01230"/>
    </source>
</evidence>
<evidence type="ECO:0000305" key="5"/>
<gene>
    <name type="primary">GPA1</name>
</gene>
<proteinExistence type="evidence at transcript level"/>
<name>GPA1_LUPLU</name>
<feature type="initiator methionine" description="Removed" evidence="3">
    <location>
        <position position="1"/>
    </location>
</feature>
<feature type="chain" id="PRO_0000203620" description="Guanine nucleotide-binding protein alpha-1 subunit">
    <location>
        <begin position="2"/>
        <end position="384"/>
    </location>
</feature>
<feature type="domain" description="G-alpha" evidence="4">
    <location>
        <begin position="38"/>
        <end position="384"/>
    </location>
</feature>
<feature type="region of interest" description="G1 motif" evidence="4">
    <location>
        <begin position="41"/>
        <end position="54"/>
    </location>
</feature>
<feature type="region of interest" description="G2 motif" evidence="4">
    <location>
        <begin position="186"/>
        <end position="194"/>
    </location>
</feature>
<feature type="region of interest" description="G3 motif" evidence="4">
    <location>
        <begin position="215"/>
        <end position="224"/>
    </location>
</feature>
<feature type="region of interest" description="G4 motif" evidence="4">
    <location>
        <begin position="284"/>
        <end position="291"/>
    </location>
</feature>
<feature type="region of interest" description="G5 motif" evidence="4">
    <location>
        <begin position="354"/>
        <end position="359"/>
    </location>
</feature>
<feature type="binding site" evidence="2">
    <location>
        <position position="49"/>
    </location>
    <ligand>
        <name>GTP</name>
        <dbReference type="ChEBI" id="CHEBI:37565"/>
    </ligand>
</feature>
<feature type="binding site" evidence="2">
    <location>
        <position position="50"/>
    </location>
    <ligand>
        <name>GTP</name>
        <dbReference type="ChEBI" id="CHEBI:37565"/>
    </ligand>
</feature>
<feature type="binding site" evidence="2">
    <location>
        <position position="51"/>
    </location>
    <ligand>
        <name>GTP</name>
        <dbReference type="ChEBI" id="CHEBI:37565"/>
    </ligand>
</feature>
<feature type="binding site" evidence="2">
    <location>
        <position position="52"/>
    </location>
    <ligand>
        <name>GTP</name>
        <dbReference type="ChEBI" id="CHEBI:37565"/>
    </ligand>
</feature>
<feature type="binding site" evidence="2">
    <location>
        <position position="53"/>
    </location>
    <ligand>
        <name>GTP</name>
        <dbReference type="ChEBI" id="CHEBI:37565"/>
    </ligand>
</feature>
<feature type="binding site" evidence="2">
    <location>
        <position position="53"/>
    </location>
    <ligand>
        <name>Mg(2+)</name>
        <dbReference type="ChEBI" id="CHEBI:18420"/>
    </ligand>
</feature>
<feature type="binding site" evidence="2">
    <location>
        <position position="54"/>
    </location>
    <ligand>
        <name>GTP</name>
        <dbReference type="ChEBI" id="CHEBI:37565"/>
    </ligand>
</feature>
<feature type="binding site" evidence="2">
    <location>
        <position position="188"/>
    </location>
    <ligand>
        <name>GTP</name>
        <dbReference type="ChEBI" id="CHEBI:37565"/>
    </ligand>
</feature>
<feature type="binding site" evidence="2">
    <location>
        <position position="189"/>
    </location>
    <ligand>
        <name>GTP</name>
        <dbReference type="ChEBI" id="CHEBI:37565"/>
    </ligand>
</feature>
<feature type="binding site" evidence="2">
    <location>
        <position position="194"/>
    </location>
    <ligand>
        <name>GTP</name>
        <dbReference type="ChEBI" id="CHEBI:37565"/>
    </ligand>
</feature>
<feature type="binding site" evidence="2">
    <location>
        <position position="194"/>
    </location>
    <ligand>
        <name>Mg(2+)</name>
        <dbReference type="ChEBI" id="CHEBI:18420"/>
    </ligand>
</feature>
<feature type="binding site" evidence="2">
    <location>
        <position position="222"/>
    </location>
    <ligand>
        <name>GTP</name>
        <dbReference type="ChEBI" id="CHEBI:37565"/>
    </ligand>
</feature>
<feature type="binding site" evidence="2">
    <location>
        <position position="288"/>
    </location>
    <ligand>
        <name>GTP</name>
        <dbReference type="ChEBI" id="CHEBI:37565"/>
    </ligand>
</feature>
<feature type="binding site" evidence="2">
    <location>
        <position position="289"/>
    </location>
    <ligand>
        <name>GTP</name>
        <dbReference type="ChEBI" id="CHEBI:37565"/>
    </ligand>
</feature>
<feature type="binding site" evidence="2">
    <location>
        <position position="291"/>
    </location>
    <ligand>
        <name>GTP</name>
        <dbReference type="ChEBI" id="CHEBI:37565"/>
    </ligand>
</feature>
<feature type="binding site" evidence="2">
    <location>
        <position position="356"/>
    </location>
    <ligand>
        <name>GTP</name>
        <dbReference type="ChEBI" id="CHEBI:37565"/>
    </ligand>
</feature>
<feature type="lipid moiety-binding region" description="N-myristoyl glycine" evidence="2">
    <location>
        <position position="2"/>
    </location>
</feature>
<feature type="lipid moiety-binding region" description="S-palmitoyl cysteine" evidence="2">
    <location>
        <position position="5"/>
    </location>
</feature>